<keyword id="KW-0119">Carbohydrate metabolism</keyword>
<keyword id="KW-0136">Cellulose degradation</keyword>
<keyword id="KW-0325">Glycoprotein</keyword>
<keyword id="KW-0326">Glycosidase</keyword>
<keyword id="KW-0378">Hydrolase</keyword>
<keyword id="KW-0624">Polysaccharide degradation</keyword>
<keyword id="KW-0964">Secreted</keyword>
<keyword id="KW-0732">Signal</keyword>
<sequence length="768" mass="82429">MHAIAGLTGFLAGVSLSYAAPTQENITSDAYFYGQSPAVYPSPEGTGSGAWASAYEKAKAFVANLTPEEKVNLTAGTDADNGCSGNIPAIPRLNFPGLCVSDAGNGLRSTDHVNAWSSGIHTGASWNKDLAQKRGLHMGSEYHKKGVNVLLGPVVGPLGRIAEGGRNWEGFSVDPYHSGLLVYETIRGIQAAGVGTSTKHYIANEQETNRNPESTDGIDVAAVSSNIDDKTMHELYLWPFQDVVRAGSVSIMCSYQRINNSYGCQNSKTLNGLLKTELGFQGYVMTDWGAQHGGIASSNAGLDMVMPSSTLWNSNLTDAIANGTMEASRLDDMATRIIASWYQMNQDAGFPSPGIGMPADVYAPHQAIIGKSSDSRKVLLQSAIEGHVLVKNKNNTLPLKSPEMISVFGYDAKGPDSLGFALEWLSYSPAIQPNHTLIVGGGSGGNSPAYISAPLDALQQQVIEDGSSILWNISAQDPEVDPNTDACLVFINSYATEGYDRAGLVDEGSDELVTNVASKCSNTIVTIHNAGIRLVNNWIDHENVTAVIFAHLPGQDSGRALVELLYGRSNPSGKLPYTVAKNADDYGALLHPKLPEGQYGLFPQDDFSEGVYIDYRAFDKQGIEPQFEFGFGLSYTTFDYSGLNIGQVSDNSTSRYPPSAAIQEGGNPHLWDVILRVSVDITNSGPVAGDEVAQLYVGIPNGPVRQLRGFEKVNIPVGQTVTVEFALGRRDLSTWDVVAQEWLLQSGTYQVYVGRSSRDLPLQGEFTI</sequence>
<evidence type="ECO:0000250" key="1"/>
<evidence type="ECO:0000255" key="2"/>
<evidence type="ECO:0000305" key="3"/>
<feature type="signal peptide" evidence="2">
    <location>
        <begin position="1"/>
        <end position="19"/>
    </location>
</feature>
<feature type="chain" id="PRO_0000394905" description="Probable beta-glucosidase M">
    <location>
        <begin position="20"/>
        <end position="768"/>
    </location>
</feature>
<feature type="active site" evidence="1">
    <location>
        <position position="287"/>
    </location>
</feature>
<feature type="glycosylation site" description="N-linked (GlcNAc...) asparagine" evidence="2">
    <location>
        <position position="25"/>
    </location>
</feature>
<feature type="glycosylation site" description="N-linked (GlcNAc...) asparagine" evidence="2">
    <location>
        <position position="72"/>
    </location>
</feature>
<feature type="glycosylation site" description="N-linked (GlcNAc...) asparagine" evidence="2">
    <location>
        <position position="259"/>
    </location>
</feature>
<feature type="glycosylation site" description="N-linked (GlcNAc...) asparagine" evidence="2">
    <location>
        <position position="315"/>
    </location>
</feature>
<feature type="glycosylation site" description="N-linked (GlcNAc...) asparagine" evidence="2">
    <location>
        <position position="322"/>
    </location>
</feature>
<feature type="glycosylation site" description="N-linked (GlcNAc...) asparagine" evidence="2">
    <location>
        <position position="394"/>
    </location>
</feature>
<feature type="glycosylation site" description="N-linked (GlcNAc...) asparagine" evidence="2">
    <location>
        <position position="434"/>
    </location>
</feature>
<feature type="glycosylation site" description="N-linked (GlcNAc...) asparagine" evidence="2">
    <location>
        <position position="472"/>
    </location>
</feature>
<feature type="glycosylation site" description="N-linked (GlcNAc...) asparagine" evidence="2">
    <location>
        <position position="543"/>
    </location>
</feature>
<feature type="glycosylation site" description="N-linked (GlcNAc...) asparagine" evidence="2">
    <location>
        <position position="651"/>
    </location>
</feature>
<protein>
    <recommendedName>
        <fullName>Probable beta-glucosidase M</fullName>
        <ecNumber>3.2.1.21</ecNumber>
    </recommendedName>
    <alternativeName>
        <fullName>Beta-D-glucoside glucohydrolase M</fullName>
    </alternativeName>
    <alternativeName>
        <fullName>Cellobiase M</fullName>
    </alternativeName>
    <alternativeName>
        <fullName>Gentiobiase M</fullName>
    </alternativeName>
</protein>
<gene>
    <name type="primary">bglM</name>
    <name type="ORF">AFLA_014190</name>
</gene>
<reference key="1">
    <citation type="journal article" date="2015" name="Genome Announc.">
        <title>Genome sequence of Aspergillus flavus NRRL 3357, a strain that causes aflatoxin contamination of food and feed.</title>
        <authorList>
            <person name="Nierman W.C."/>
            <person name="Yu J."/>
            <person name="Fedorova-Abrams N.D."/>
            <person name="Losada L."/>
            <person name="Cleveland T.E."/>
            <person name="Bhatnagar D."/>
            <person name="Bennett J.W."/>
            <person name="Dean R."/>
            <person name="Payne G.A."/>
        </authorList>
    </citation>
    <scope>NUCLEOTIDE SEQUENCE [LARGE SCALE GENOMIC DNA]</scope>
    <source>
        <strain>ATCC 200026 / FGSC A1120 / IAM 13836 / NRRL 3357 / JCM 12722 / SRRC 167</strain>
    </source>
</reference>
<dbReference type="EC" id="3.2.1.21"/>
<dbReference type="EMBL" id="EQ963474">
    <property type="protein sequence ID" value="EED54167.1"/>
    <property type="molecule type" value="Genomic_DNA"/>
</dbReference>
<dbReference type="RefSeq" id="XP_002375439.1">
    <property type="nucleotide sequence ID" value="XM_002375398.1"/>
</dbReference>
<dbReference type="SMR" id="B8N5S6"/>
<dbReference type="STRING" id="332952.B8N5S6"/>
<dbReference type="GlyCosmos" id="B8N5S6">
    <property type="glycosylation" value="10 sites, No reported glycans"/>
</dbReference>
<dbReference type="EnsemblFungi" id="EED54167">
    <property type="protein sequence ID" value="EED54167"/>
    <property type="gene ID" value="AFLA_014190"/>
</dbReference>
<dbReference type="VEuPathDB" id="FungiDB:AFLA_001849"/>
<dbReference type="eggNOG" id="ENOG502SMNU">
    <property type="taxonomic scope" value="Eukaryota"/>
</dbReference>
<dbReference type="HOGENOM" id="CLU_004542_2_1_1"/>
<dbReference type="OMA" id="PGLCVSD"/>
<dbReference type="UniPathway" id="UPA00696"/>
<dbReference type="GO" id="GO:0005576">
    <property type="term" value="C:extracellular region"/>
    <property type="evidence" value="ECO:0007669"/>
    <property type="project" value="UniProtKB-SubCell"/>
</dbReference>
<dbReference type="GO" id="GO:0008422">
    <property type="term" value="F:beta-glucosidase activity"/>
    <property type="evidence" value="ECO:0007669"/>
    <property type="project" value="UniProtKB-EC"/>
</dbReference>
<dbReference type="GO" id="GO:0030245">
    <property type="term" value="P:cellulose catabolic process"/>
    <property type="evidence" value="ECO:0007669"/>
    <property type="project" value="UniProtKB-UniPathway"/>
</dbReference>
<dbReference type="FunFam" id="2.60.40.10:FF:000757">
    <property type="entry name" value="Beta-glucosidase G"/>
    <property type="match status" value="1"/>
</dbReference>
<dbReference type="FunFam" id="3.20.20.300:FF:000002">
    <property type="entry name" value="Probable beta-glucosidase"/>
    <property type="match status" value="1"/>
</dbReference>
<dbReference type="Gene3D" id="3.40.50.1700">
    <property type="entry name" value="Glycoside hydrolase family 3 C-terminal domain"/>
    <property type="match status" value="1"/>
</dbReference>
<dbReference type="Gene3D" id="3.20.20.300">
    <property type="entry name" value="Glycoside hydrolase, family 3, N-terminal domain"/>
    <property type="match status" value="1"/>
</dbReference>
<dbReference type="Gene3D" id="2.60.40.10">
    <property type="entry name" value="Immunoglobulins"/>
    <property type="match status" value="1"/>
</dbReference>
<dbReference type="InterPro" id="IPR050288">
    <property type="entry name" value="Cellulose_deg_GH3"/>
</dbReference>
<dbReference type="InterPro" id="IPR026891">
    <property type="entry name" value="Fn3-like"/>
</dbReference>
<dbReference type="InterPro" id="IPR002772">
    <property type="entry name" value="Glyco_hydro_3_C"/>
</dbReference>
<dbReference type="InterPro" id="IPR036881">
    <property type="entry name" value="Glyco_hydro_3_C_sf"/>
</dbReference>
<dbReference type="InterPro" id="IPR001764">
    <property type="entry name" value="Glyco_hydro_3_N"/>
</dbReference>
<dbReference type="InterPro" id="IPR036962">
    <property type="entry name" value="Glyco_hydro_3_N_sf"/>
</dbReference>
<dbReference type="InterPro" id="IPR017853">
    <property type="entry name" value="Glycoside_hydrolase_SF"/>
</dbReference>
<dbReference type="InterPro" id="IPR013783">
    <property type="entry name" value="Ig-like_fold"/>
</dbReference>
<dbReference type="PANTHER" id="PTHR42715">
    <property type="entry name" value="BETA-GLUCOSIDASE"/>
    <property type="match status" value="1"/>
</dbReference>
<dbReference type="PANTHER" id="PTHR42715:SF5">
    <property type="entry name" value="BETA-GLUCOSIDASE M-RELATED"/>
    <property type="match status" value="1"/>
</dbReference>
<dbReference type="Pfam" id="PF14310">
    <property type="entry name" value="Fn3-like"/>
    <property type="match status" value="1"/>
</dbReference>
<dbReference type="Pfam" id="PF00933">
    <property type="entry name" value="Glyco_hydro_3"/>
    <property type="match status" value="1"/>
</dbReference>
<dbReference type="Pfam" id="PF01915">
    <property type="entry name" value="Glyco_hydro_3_C"/>
    <property type="match status" value="1"/>
</dbReference>
<dbReference type="PRINTS" id="PR00133">
    <property type="entry name" value="GLHYDRLASE3"/>
</dbReference>
<dbReference type="SMART" id="SM01217">
    <property type="entry name" value="Fn3_like"/>
    <property type="match status" value="1"/>
</dbReference>
<dbReference type="SUPFAM" id="SSF51445">
    <property type="entry name" value="(Trans)glycosidases"/>
    <property type="match status" value="1"/>
</dbReference>
<dbReference type="SUPFAM" id="SSF52279">
    <property type="entry name" value="Beta-D-glucan exohydrolase, C-terminal domain"/>
    <property type="match status" value="1"/>
</dbReference>
<name>BGLM_ASPFN</name>
<proteinExistence type="inferred from homology"/>
<accession>B8N5S6</accession>
<comment type="function">
    <text evidence="1">Beta-glucosidases are one of a number of cellulolytic enzymes involved in the degradation of cellulosic biomass. Catalyzes the last step releasing glucose from the inhibitory cellobiose (By similarity).</text>
</comment>
<comment type="catalytic activity">
    <reaction>
        <text>Hydrolysis of terminal, non-reducing beta-D-glucosyl residues with release of beta-D-glucose.</text>
        <dbReference type="EC" id="3.2.1.21"/>
    </reaction>
</comment>
<comment type="pathway">
    <text>Glycan metabolism; cellulose degradation.</text>
</comment>
<comment type="subcellular location">
    <subcellularLocation>
        <location evidence="1">Secreted</location>
    </subcellularLocation>
</comment>
<comment type="similarity">
    <text evidence="3">Belongs to the glycosyl hydrolase 3 family.</text>
</comment>
<organism>
    <name type="scientific">Aspergillus flavus (strain ATCC 200026 / FGSC A1120 / IAM 13836 / NRRL 3357 / JCM 12722 / SRRC 167)</name>
    <dbReference type="NCBI Taxonomy" id="332952"/>
    <lineage>
        <taxon>Eukaryota</taxon>
        <taxon>Fungi</taxon>
        <taxon>Dikarya</taxon>
        <taxon>Ascomycota</taxon>
        <taxon>Pezizomycotina</taxon>
        <taxon>Eurotiomycetes</taxon>
        <taxon>Eurotiomycetidae</taxon>
        <taxon>Eurotiales</taxon>
        <taxon>Aspergillaceae</taxon>
        <taxon>Aspergillus</taxon>
        <taxon>Aspergillus subgen. Circumdati</taxon>
    </lineage>
</organism>